<evidence type="ECO:0000255" key="1">
    <source>
        <dbReference type="HAMAP-Rule" id="MF_00120"/>
    </source>
</evidence>
<organism>
    <name type="scientific">Methanococcus maripaludis (strain C6 / ATCC BAA-1332)</name>
    <dbReference type="NCBI Taxonomy" id="444158"/>
    <lineage>
        <taxon>Archaea</taxon>
        <taxon>Methanobacteriati</taxon>
        <taxon>Methanobacteriota</taxon>
        <taxon>Methanomada group</taxon>
        <taxon>Methanococci</taxon>
        <taxon>Methanococcales</taxon>
        <taxon>Methanococcaceae</taxon>
        <taxon>Methanococcus</taxon>
    </lineage>
</organism>
<comment type="function">
    <text evidence="1">Allows the formation of correctly charged Gln-tRNA(Gln) through the transamidation of misacylated Glu-tRNA(Gln) in organisms which lack glutaminyl-tRNA synthetase. The reaction takes place in the presence of glutamine and ATP through an activated gamma-phospho-Glu-tRNA(Gln).</text>
</comment>
<comment type="catalytic activity">
    <reaction evidence="1">
        <text>L-glutamyl-tRNA(Gln) + L-glutamine + ATP + H2O = L-glutaminyl-tRNA(Gln) + L-glutamate + ADP + phosphate + H(+)</text>
        <dbReference type="Rhea" id="RHEA:17521"/>
        <dbReference type="Rhea" id="RHEA-COMP:9681"/>
        <dbReference type="Rhea" id="RHEA-COMP:9684"/>
        <dbReference type="ChEBI" id="CHEBI:15377"/>
        <dbReference type="ChEBI" id="CHEBI:15378"/>
        <dbReference type="ChEBI" id="CHEBI:29985"/>
        <dbReference type="ChEBI" id="CHEBI:30616"/>
        <dbReference type="ChEBI" id="CHEBI:43474"/>
        <dbReference type="ChEBI" id="CHEBI:58359"/>
        <dbReference type="ChEBI" id="CHEBI:78520"/>
        <dbReference type="ChEBI" id="CHEBI:78521"/>
        <dbReference type="ChEBI" id="CHEBI:456216"/>
        <dbReference type="EC" id="6.3.5.7"/>
    </reaction>
</comment>
<comment type="subunit">
    <text evidence="1">Heterotrimer of A, B and C subunits.</text>
</comment>
<comment type="similarity">
    <text evidence="1">Belongs to the amidase family. GatA subfamily.</text>
</comment>
<proteinExistence type="inferred from homology"/>
<feature type="chain" id="PRO_1000095149" description="Glutamyl-tRNA(Gln) amidotransferase subunit A">
    <location>
        <begin position="1"/>
        <end position="431"/>
    </location>
</feature>
<feature type="active site" description="Charge relay system" evidence="1">
    <location>
        <position position="55"/>
    </location>
</feature>
<feature type="active site" description="Charge relay system" evidence="1">
    <location>
        <position position="130"/>
    </location>
</feature>
<feature type="active site" description="Acyl-ester intermediate" evidence="1">
    <location>
        <position position="154"/>
    </location>
</feature>
<dbReference type="EC" id="6.3.5.7" evidence="1"/>
<dbReference type="EMBL" id="CP000867">
    <property type="protein sequence ID" value="ABX01975.1"/>
    <property type="molecule type" value="Genomic_DNA"/>
</dbReference>
<dbReference type="SMR" id="A9A9F2"/>
<dbReference type="STRING" id="444158.MmarC6_1162"/>
<dbReference type="KEGG" id="mmx:MmarC6_1162"/>
<dbReference type="eggNOG" id="arCOG01717">
    <property type="taxonomic scope" value="Archaea"/>
</dbReference>
<dbReference type="HOGENOM" id="CLU_009600_0_3_2"/>
<dbReference type="OrthoDB" id="7931at2157"/>
<dbReference type="PhylomeDB" id="A9A9F2"/>
<dbReference type="GO" id="GO:0030956">
    <property type="term" value="C:glutamyl-tRNA(Gln) amidotransferase complex"/>
    <property type="evidence" value="ECO:0007669"/>
    <property type="project" value="InterPro"/>
</dbReference>
<dbReference type="GO" id="GO:0005524">
    <property type="term" value="F:ATP binding"/>
    <property type="evidence" value="ECO:0007669"/>
    <property type="project" value="UniProtKB-KW"/>
</dbReference>
<dbReference type="GO" id="GO:0050567">
    <property type="term" value="F:glutaminyl-tRNA synthase (glutamine-hydrolyzing) activity"/>
    <property type="evidence" value="ECO:0007669"/>
    <property type="project" value="UniProtKB-UniRule"/>
</dbReference>
<dbReference type="GO" id="GO:0006412">
    <property type="term" value="P:translation"/>
    <property type="evidence" value="ECO:0007669"/>
    <property type="project" value="UniProtKB-UniRule"/>
</dbReference>
<dbReference type="Gene3D" id="3.90.1300.10">
    <property type="entry name" value="Amidase signature (AS) domain"/>
    <property type="match status" value="1"/>
</dbReference>
<dbReference type="HAMAP" id="MF_00120">
    <property type="entry name" value="GatA"/>
    <property type="match status" value="1"/>
</dbReference>
<dbReference type="InterPro" id="IPR000120">
    <property type="entry name" value="Amidase"/>
</dbReference>
<dbReference type="InterPro" id="IPR020556">
    <property type="entry name" value="Amidase_CS"/>
</dbReference>
<dbReference type="InterPro" id="IPR023631">
    <property type="entry name" value="Amidase_dom"/>
</dbReference>
<dbReference type="InterPro" id="IPR036928">
    <property type="entry name" value="AS_sf"/>
</dbReference>
<dbReference type="InterPro" id="IPR004412">
    <property type="entry name" value="GatA"/>
</dbReference>
<dbReference type="NCBIfam" id="TIGR00132">
    <property type="entry name" value="gatA"/>
    <property type="match status" value="1"/>
</dbReference>
<dbReference type="PANTHER" id="PTHR11895:SF7">
    <property type="entry name" value="GLUTAMYL-TRNA(GLN) AMIDOTRANSFERASE SUBUNIT A, MITOCHONDRIAL"/>
    <property type="match status" value="1"/>
</dbReference>
<dbReference type="PANTHER" id="PTHR11895">
    <property type="entry name" value="TRANSAMIDASE"/>
    <property type="match status" value="1"/>
</dbReference>
<dbReference type="Pfam" id="PF01425">
    <property type="entry name" value="Amidase"/>
    <property type="match status" value="1"/>
</dbReference>
<dbReference type="SUPFAM" id="SSF75304">
    <property type="entry name" value="Amidase signature (AS) enzymes"/>
    <property type="match status" value="1"/>
</dbReference>
<dbReference type="PROSITE" id="PS00571">
    <property type="entry name" value="AMIDASES"/>
    <property type="match status" value="1"/>
</dbReference>
<sequence length="431" mass="47358">MITDRVSDYLEKIEKSDVNAFIDVNSEKVLKEAEELEKNDYLKNKPLYGKIVAVKSNINVKGYKISCASKTLEKYTGTYDATVVKKLRLQGALIVGMTNMDEFASGSSGETSYFGPTKNPAAMDRIPGGSSSGSAAAVAADLCDMAIGSDTGGSIRNPASHCGIVGFKPSYGVVSRQGLCDLAMSFDQIGPLTKNAEDALVLTNAIKGIDRSDSTSLETPKFEKKDISNYKVGVVKEFMDVTDEKIRNEIEKGIEVFKDMGCKIVDLSYKYIDLALPTYYLINYVEFFSATRKYDGRRYGEFIEEACGEEVLRRILIGKHISEQEFSGKYYKKALQARKAMKKEMLGLFNSADLIVGPTVPKLPHKLGEDLSPMEMYAYDVLTVPTNICGICSGVVRCGNIQGVPVGLQIQGAPLEDEKVLSAMIEFEKNY</sequence>
<accession>A9A9F2</accession>
<keyword id="KW-0067">ATP-binding</keyword>
<keyword id="KW-0436">Ligase</keyword>
<keyword id="KW-0547">Nucleotide-binding</keyword>
<keyword id="KW-0648">Protein biosynthesis</keyword>
<reference key="1">
    <citation type="submission" date="2007-10" db="EMBL/GenBank/DDBJ databases">
        <title>Complete sequence of Methanococcus maripaludis C6.</title>
        <authorList>
            <consortium name="US DOE Joint Genome Institute"/>
            <person name="Copeland A."/>
            <person name="Lucas S."/>
            <person name="Lapidus A."/>
            <person name="Barry K."/>
            <person name="Glavina del Rio T."/>
            <person name="Dalin E."/>
            <person name="Tice H."/>
            <person name="Pitluck S."/>
            <person name="Clum A."/>
            <person name="Schmutz J."/>
            <person name="Larimer F."/>
            <person name="Land M."/>
            <person name="Hauser L."/>
            <person name="Kyrpides N."/>
            <person name="Mikhailova N."/>
            <person name="Sieprawska-Lupa M."/>
            <person name="Whitman W.B."/>
            <person name="Richardson P."/>
        </authorList>
    </citation>
    <scope>NUCLEOTIDE SEQUENCE [LARGE SCALE GENOMIC DNA]</scope>
    <source>
        <strain>C6 / ATCC BAA-1332</strain>
    </source>
</reference>
<gene>
    <name evidence="1" type="primary">gatA</name>
    <name type="ordered locus">MmarC6_1162</name>
</gene>
<name>GATA_METM6</name>
<protein>
    <recommendedName>
        <fullName evidence="1">Glutamyl-tRNA(Gln) amidotransferase subunit A</fullName>
        <shortName evidence="1">Glu-ADT subunit A</shortName>
        <ecNumber evidence="1">6.3.5.7</ecNumber>
    </recommendedName>
</protein>